<keyword id="KW-0028">Amino-acid biosynthesis</keyword>
<keyword id="KW-0057">Aromatic amino acid biosynthesis</keyword>
<keyword id="KW-0413">Isomerase</keyword>
<keyword id="KW-1185">Reference proteome</keyword>
<keyword id="KW-0822">Tryptophan biosynthesis</keyword>
<comment type="catalytic activity">
    <reaction>
        <text>N-(5-phospho-beta-D-ribosyl)anthranilate = 1-(2-carboxyphenylamino)-1-deoxy-D-ribulose 5-phosphate</text>
        <dbReference type="Rhea" id="RHEA:21540"/>
        <dbReference type="ChEBI" id="CHEBI:18277"/>
        <dbReference type="ChEBI" id="CHEBI:58613"/>
        <dbReference type="EC" id="5.3.1.24"/>
    </reaction>
</comment>
<comment type="pathway">
    <text>Amino-acid biosynthesis; L-tryptophan biosynthesis; L-tryptophan from chorismate: step 3/5.</text>
</comment>
<comment type="similarity">
    <text evidence="1">Belongs to the TrpF family.</text>
</comment>
<proteinExistence type="inferred from homology"/>
<sequence>MKKPALKYCGIRSLKDLQLAAESQADYLGFIFAESKRKVSPEDVKKWLNQVRVEKQVAGVFVNESIETMSRIAKSLKLDVIQLHGDEKPADAAALRKLTGCEIWKALHHQDNTTQEIARFKDNVDGFVIDSSVKGSRGGTGVAFSWECVPEYQQAAIGKRCFIAGGVNPDSITRLLKWQPEGIDLASGIEKNGQKDQNLMRLLEERMNRYVSISE</sequence>
<reference key="1">
    <citation type="journal article" date="1985" name="Gene">
        <title>Nucleotide sequence of the Bacillus subtilis tryptophan operon.</title>
        <authorList>
            <person name="Henner D.J."/>
            <person name="Band L."/>
            <person name="Shimotsu H."/>
        </authorList>
    </citation>
    <scope>NUCLEOTIDE SEQUENCE [GENOMIC DNA]</scope>
</reference>
<reference key="2">
    <citation type="journal article" date="1997" name="Nature">
        <title>The complete genome sequence of the Gram-positive bacterium Bacillus subtilis.</title>
        <authorList>
            <person name="Kunst F."/>
            <person name="Ogasawara N."/>
            <person name="Moszer I."/>
            <person name="Albertini A.M."/>
            <person name="Alloni G."/>
            <person name="Azevedo V."/>
            <person name="Bertero M.G."/>
            <person name="Bessieres P."/>
            <person name="Bolotin A."/>
            <person name="Borchert S."/>
            <person name="Borriss R."/>
            <person name="Boursier L."/>
            <person name="Brans A."/>
            <person name="Braun M."/>
            <person name="Brignell S.C."/>
            <person name="Bron S."/>
            <person name="Brouillet S."/>
            <person name="Bruschi C.V."/>
            <person name="Caldwell B."/>
            <person name="Capuano V."/>
            <person name="Carter N.M."/>
            <person name="Choi S.-K."/>
            <person name="Codani J.-J."/>
            <person name="Connerton I.F."/>
            <person name="Cummings N.J."/>
            <person name="Daniel R.A."/>
            <person name="Denizot F."/>
            <person name="Devine K.M."/>
            <person name="Duesterhoeft A."/>
            <person name="Ehrlich S.D."/>
            <person name="Emmerson P.T."/>
            <person name="Entian K.-D."/>
            <person name="Errington J."/>
            <person name="Fabret C."/>
            <person name="Ferrari E."/>
            <person name="Foulger D."/>
            <person name="Fritz C."/>
            <person name="Fujita M."/>
            <person name="Fujita Y."/>
            <person name="Fuma S."/>
            <person name="Galizzi A."/>
            <person name="Galleron N."/>
            <person name="Ghim S.-Y."/>
            <person name="Glaser P."/>
            <person name="Goffeau A."/>
            <person name="Golightly E.J."/>
            <person name="Grandi G."/>
            <person name="Guiseppi G."/>
            <person name="Guy B.J."/>
            <person name="Haga K."/>
            <person name="Haiech J."/>
            <person name="Harwood C.R."/>
            <person name="Henaut A."/>
            <person name="Hilbert H."/>
            <person name="Holsappel S."/>
            <person name="Hosono S."/>
            <person name="Hullo M.-F."/>
            <person name="Itaya M."/>
            <person name="Jones L.-M."/>
            <person name="Joris B."/>
            <person name="Karamata D."/>
            <person name="Kasahara Y."/>
            <person name="Klaerr-Blanchard M."/>
            <person name="Klein C."/>
            <person name="Kobayashi Y."/>
            <person name="Koetter P."/>
            <person name="Koningstein G."/>
            <person name="Krogh S."/>
            <person name="Kumano M."/>
            <person name="Kurita K."/>
            <person name="Lapidus A."/>
            <person name="Lardinois S."/>
            <person name="Lauber J."/>
            <person name="Lazarevic V."/>
            <person name="Lee S.-M."/>
            <person name="Levine A."/>
            <person name="Liu H."/>
            <person name="Masuda S."/>
            <person name="Mauel C."/>
            <person name="Medigue C."/>
            <person name="Medina N."/>
            <person name="Mellado R.P."/>
            <person name="Mizuno M."/>
            <person name="Moestl D."/>
            <person name="Nakai S."/>
            <person name="Noback M."/>
            <person name="Noone D."/>
            <person name="O'Reilly M."/>
            <person name="Ogawa K."/>
            <person name="Ogiwara A."/>
            <person name="Oudega B."/>
            <person name="Park S.-H."/>
            <person name="Parro V."/>
            <person name="Pohl T.M."/>
            <person name="Portetelle D."/>
            <person name="Porwollik S."/>
            <person name="Prescott A.M."/>
            <person name="Presecan E."/>
            <person name="Pujic P."/>
            <person name="Purnelle B."/>
            <person name="Rapoport G."/>
            <person name="Rey M."/>
            <person name="Reynolds S."/>
            <person name="Rieger M."/>
            <person name="Rivolta C."/>
            <person name="Rocha E."/>
            <person name="Roche B."/>
            <person name="Rose M."/>
            <person name="Sadaie Y."/>
            <person name="Sato T."/>
            <person name="Scanlan E."/>
            <person name="Schleich S."/>
            <person name="Schroeter R."/>
            <person name="Scoffone F."/>
            <person name="Sekiguchi J."/>
            <person name="Sekowska A."/>
            <person name="Seror S.J."/>
            <person name="Serror P."/>
            <person name="Shin B.-S."/>
            <person name="Soldo B."/>
            <person name="Sorokin A."/>
            <person name="Tacconi E."/>
            <person name="Takagi T."/>
            <person name="Takahashi H."/>
            <person name="Takemaru K."/>
            <person name="Takeuchi M."/>
            <person name="Tamakoshi A."/>
            <person name="Tanaka T."/>
            <person name="Terpstra P."/>
            <person name="Tognoni A."/>
            <person name="Tosato V."/>
            <person name="Uchiyama S."/>
            <person name="Vandenbol M."/>
            <person name="Vannier F."/>
            <person name="Vassarotti A."/>
            <person name="Viari A."/>
            <person name="Wambutt R."/>
            <person name="Wedler E."/>
            <person name="Wedler H."/>
            <person name="Weitzenegger T."/>
            <person name="Winters P."/>
            <person name="Wipat A."/>
            <person name="Yamamoto H."/>
            <person name="Yamane K."/>
            <person name="Yasumoto K."/>
            <person name="Yata K."/>
            <person name="Yoshida K."/>
            <person name="Yoshikawa H.-F."/>
            <person name="Zumstein E."/>
            <person name="Yoshikawa H."/>
            <person name="Danchin A."/>
        </authorList>
    </citation>
    <scope>NUCLEOTIDE SEQUENCE [LARGE SCALE GENOMIC DNA]</scope>
    <source>
        <strain>168</strain>
    </source>
</reference>
<reference key="3">
    <citation type="journal article" date="1999" name="Genome Res.">
        <title>Detecting and analyzing DNA sequencing errors: toward a higher quality of the Bacillus subtilis genome sequence.</title>
        <authorList>
            <person name="Medigue C."/>
            <person name="Rose M."/>
            <person name="Viari A."/>
            <person name="Danchin A."/>
        </authorList>
    </citation>
    <scope>SEQUENCE REVISION</scope>
</reference>
<reference key="4">
    <citation type="journal article" date="2009" name="Microbiology">
        <title>From a consortium sequence to a unified sequence: the Bacillus subtilis 168 reference genome a decade later.</title>
        <authorList>
            <person name="Barbe V."/>
            <person name="Cruveiller S."/>
            <person name="Kunst F."/>
            <person name="Lenoble P."/>
            <person name="Meurice G."/>
            <person name="Sekowska A."/>
            <person name="Vallenet D."/>
            <person name="Wang T."/>
            <person name="Moszer I."/>
            <person name="Medigue C."/>
            <person name="Danchin A."/>
        </authorList>
    </citation>
    <scope>SEQUENCE REVISION TO 92 AND 147</scope>
</reference>
<feature type="chain" id="PRO_0000154347" description="N-(5'-phosphoribosyl)anthranilate isomerase">
    <location>
        <begin position="1"/>
        <end position="215"/>
    </location>
</feature>
<feature type="sequence conflict" description="In Ref. 1; AAA20864/AAA22868." evidence="1" ref="1">
    <original>K</original>
    <variation>Q</variation>
    <location>
        <position position="15"/>
    </location>
</feature>
<feature type="sequence conflict" description="In Ref. 1; AAA20864/AAA22868." evidence="1" ref="1">
    <original>E</original>
    <variation>D</variation>
    <location>
        <position position="22"/>
    </location>
</feature>
<feature type="sequence conflict" description="In Ref. 1; AAA20864/AAA22868." evidence="1" ref="1">
    <original>K</original>
    <variation>Y</variation>
    <location>
        <position position="36"/>
    </location>
</feature>
<feature type="sequence conflict" description="In Ref. 1; AAA20864/AAA22868." evidence="1" ref="1">
    <original>E</original>
    <variation>Q</variation>
    <location>
        <position position="42"/>
    </location>
</feature>
<feature type="sequence conflict" description="In Ref. 1; AAA20864/AAA22868." evidence="1" ref="1">
    <original>N</original>
    <variation>S</variation>
    <location>
        <position position="49"/>
    </location>
</feature>
<feature type="sequence conflict" description="In Ref. 1; AAA20864/AAA22868." evidence="1" ref="1">
    <original>R</original>
    <variation>C</variation>
    <location>
        <position position="52"/>
    </location>
</feature>
<feature type="sequence conflict" description="In Ref. 1; AAA20864/AAA22868." evidence="1" ref="1">
    <original>KSLK</original>
    <variation>EDLN</variation>
    <location>
        <begin position="74"/>
        <end position="77"/>
    </location>
</feature>
<feature type="sequence conflict" description="In Ref. 1; AAA20864/AAA22868." evidence="1" ref="1">
    <original>K</original>
    <variation>E</variation>
    <location>
        <position position="88"/>
    </location>
</feature>
<feature type="sequence conflict" description="In Ref. 1; AAA20864/AAA22868." evidence="1" ref="1">
    <original>A</original>
    <variation>D</variation>
    <location>
        <position position="93"/>
    </location>
</feature>
<feature type="sequence conflict" description="In Ref. 1; AAA20864/AAA22868." evidence="1" ref="1">
    <original>K</original>
    <variation>M</variation>
    <location>
        <position position="97"/>
    </location>
</feature>
<feature type="sequence conflict" description="In Ref. 1; AAA20864/AAA22868." evidence="1" ref="1">
    <original>G</original>
    <variation>D</variation>
    <location>
        <position position="100"/>
    </location>
</feature>
<feature type="sequence conflict" description="In Ref. 1; AAA20864/AAA22868." evidence="1" ref="1">
    <original>QD</original>
    <variation>HE</variation>
    <location>
        <begin position="110"/>
        <end position="111"/>
    </location>
</feature>
<feature type="sequence conflict" description="In Ref. 1; AAA20864/AAA22868." evidence="1" ref="1">
    <original>N</original>
    <variation>D</variation>
    <location>
        <position position="123"/>
    </location>
</feature>
<feature type="sequence conflict" description="In Ref. 1; AAA20864/AAA22868." evidence="1" ref="1">
    <original>S</original>
    <variation>A</variation>
    <location>
        <position position="136"/>
    </location>
</feature>
<feature type="sequence conflict" description="In Ref. 1; AAA20864/AAA22868." evidence="1" ref="1">
    <original>E</original>
    <variation>D</variation>
    <location>
        <position position="147"/>
    </location>
</feature>
<feature type="sequence conflict" description="In Ref. 1; AAA20864/AAA22868." evidence="1" ref="1">
    <original>S</original>
    <variation>T</variation>
    <location>
        <position position="171"/>
    </location>
</feature>
<feature type="sequence conflict" description="In Ref. 1; AAA20864/AAA22868." evidence="1" ref="1">
    <original>RLLKW</original>
    <variation>DLMKY</variation>
    <location>
        <begin position="174"/>
        <end position="178"/>
    </location>
</feature>
<feature type="sequence conflict" description="In Ref. 1; AAA20864/AAA22868." evidence="1" ref="1">
    <original>E</original>
    <variation>A</variation>
    <location>
        <position position="181"/>
    </location>
</feature>
<name>TRPF_BACSU</name>
<evidence type="ECO:0000305" key="1"/>
<accession>P20167</accession>
<organism>
    <name type="scientific">Bacillus subtilis (strain 168)</name>
    <dbReference type="NCBI Taxonomy" id="224308"/>
    <lineage>
        <taxon>Bacteria</taxon>
        <taxon>Bacillati</taxon>
        <taxon>Bacillota</taxon>
        <taxon>Bacilli</taxon>
        <taxon>Bacillales</taxon>
        <taxon>Bacillaceae</taxon>
        <taxon>Bacillus</taxon>
    </lineage>
</organism>
<protein>
    <recommendedName>
        <fullName>N-(5'-phosphoribosyl)anthranilate isomerase</fullName>
        <shortName>PRAI</shortName>
        <ecNumber>5.3.1.24</ecNumber>
    </recommendedName>
</protein>
<gene>
    <name type="primary">trpF</name>
    <name type="ordered locus">BSU22650</name>
</gene>
<dbReference type="EC" id="5.3.1.24"/>
<dbReference type="EMBL" id="M80245">
    <property type="protein sequence ID" value="AAA20864.1"/>
    <property type="molecule type" value="Genomic_DNA"/>
</dbReference>
<dbReference type="EMBL" id="K01391">
    <property type="protein sequence ID" value="AAA22868.1"/>
    <property type="molecule type" value="Genomic_DNA"/>
</dbReference>
<dbReference type="EMBL" id="AL009126">
    <property type="protein sequence ID" value="CAB14181.3"/>
    <property type="molecule type" value="Genomic_DNA"/>
</dbReference>
<dbReference type="PIR" id="D22794">
    <property type="entry name" value="D22794"/>
</dbReference>
<dbReference type="RefSeq" id="NP_390146.3">
    <property type="nucleotide sequence ID" value="NC_000964.3"/>
</dbReference>
<dbReference type="RefSeq" id="WP_004398742.1">
    <property type="nucleotide sequence ID" value="NZ_OZ025638.1"/>
</dbReference>
<dbReference type="SMR" id="P20167"/>
<dbReference type="FunCoup" id="P20167">
    <property type="interactions" value="305"/>
</dbReference>
<dbReference type="STRING" id="224308.BSU22650"/>
<dbReference type="PaxDb" id="224308-BSU22650"/>
<dbReference type="DNASU" id="939006"/>
<dbReference type="EnsemblBacteria" id="CAB14181">
    <property type="protein sequence ID" value="CAB14181"/>
    <property type="gene ID" value="BSU_22650"/>
</dbReference>
<dbReference type="GeneID" id="939006"/>
<dbReference type="KEGG" id="bsu:BSU22650"/>
<dbReference type="eggNOG" id="COG0135">
    <property type="taxonomic scope" value="Bacteria"/>
</dbReference>
<dbReference type="InParanoid" id="P20167"/>
<dbReference type="OrthoDB" id="9786954at2"/>
<dbReference type="PhylomeDB" id="P20167"/>
<dbReference type="BioCyc" id="BSUB:BSU22650-MONOMER"/>
<dbReference type="UniPathway" id="UPA00035">
    <property type="reaction ID" value="UER00042"/>
</dbReference>
<dbReference type="Proteomes" id="UP000001570">
    <property type="component" value="Chromosome"/>
</dbReference>
<dbReference type="GO" id="GO:0004640">
    <property type="term" value="F:phosphoribosylanthranilate isomerase activity"/>
    <property type="evidence" value="ECO:0000318"/>
    <property type="project" value="GO_Central"/>
</dbReference>
<dbReference type="GO" id="GO:0000162">
    <property type="term" value="P:L-tryptophan biosynthetic process"/>
    <property type="evidence" value="ECO:0000318"/>
    <property type="project" value="GO_Central"/>
</dbReference>
<dbReference type="CDD" id="cd00405">
    <property type="entry name" value="PRAI"/>
    <property type="match status" value="1"/>
</dbReference>
<dbReference type="Gene3D" id="3.20.20.70">
    <property type="entry name" value="Aldolase class I"/>
    <property type="match status" value="1"/>
</dbReference>
<dbReference type="HAMAP" id="MF_00135">
    <property type="entry name" value="PRAI"/>
    <property type="match status" value="1"/>
</dbReference>
<dbReference type="InterPro" id="IPR013785">
    <property type="entry name" value="Aldolase_TIM"/>
</dbReference>
<dbReference type="InterPro" id="IPR001240">
    <property type="entry name" value="PRAI_dom"/>
</dbReference>
<dbReference type="InterPro" id="IPR011060">
    <property type="entry name" value="RibuloseP-bd_barrel"/>
</dbReference>
<dbReference type="InterPro" id="IPR044643">
    <property type="entry name" value="TrpF_fam"/>
</dbReference>
<dbReference type="NCBIfam" id="NF002301">
    <property type="entry name" value="PRK01222.2-1"/>
    <property type="match status" value="1"/>
</dbReference>
<dbReference type="PANTHER" id="PTHR42894">
    <property type="entry name" value="N-(5'-PHOSPHORIBOSYL)ANTHRANILATE ISOMERASE"/>
    <property type="match status" value="1"/>
</dbReference>
<dbReference type="PANTHER" id="PTHR42894:SF1">
    <property type="entry name" value="N-(5'-PHOSPHORIBOSYL)ANTHRANILATE ISOMERASE"/>
    <property type="match status" value="1"/>
</dbReference>
<dbReference type="Pfam" id="PF00697">
    <property type="entry name" value="PRAI"/>
    <property type="match status" value="1"/>
</dbReference>
<dbReference type="SUPFAM" id="SSF51366">
    <property type="entry name" value="Ribulose-phoshate binding barrel"/>
    <property type="match status" value="1"/>
</dbReference>